<accession>Q2IXS8</accession>
<comment type="function">
    <text evidence="1">Forms part of the ribosomal stalk which helps the ribosome interact with GTP-bound translation factors.</text>
</comment>
<comment type="subunit">
    <text evidence="1">Part of the ribosomal stalk of the 50S ribosomal subunit. Interacts with L10 and the large rRNA to form the base of the stalk. L10 forms an elongated spine to which L12 dimers bind in a sequential fashion forming a multimeric L10(L12)X complex.</text>
</comment>
<comment type="PTM">
    <text evidence="1">One or more lysine residues are methylated.</text>
</comment>
<comment type="similarity">
    <text evidence="1">Belongs to the universal ribosomal protein uL11 family.</text>
</comment>
<feature type="chain" id="PRO_0000258201" description="Large ribosomal subunit protein uL11">
    <location>
        <begin position="1"/>
        <end position="142"/>
    </location>
</feature>
<gene>
    <name evidence="1" type="primary">rplK</name>
    <name type="ordered locus">RPB_2277</name>
</gene>
<dbReference type="EMBL" id="CP000250">
    <property type="protein sequence ID" value="ABD06982.1"/>
    <property type="molecule type" value="Genomic_DNA"/>
</dbReference>
<dbReference type="RefSeq" id="WP_011441169.1">
    <property type="nucleotide sequence ID" value="NC_007778.1"/>
</dbReference>
<dbReference type="SMR" id="Q2IXS8"/>
<dbReference type="STRING" id="316058.RPB_2277"/>
<dbReference type="KEGG" id="rpb:RPB_2277"/>
<dbReference type="eggNOG" id="COG0080">
    <property type="taxonomic scope" value="Bacteria"/>
</dbReference>
<dbReference type="HOGENOM" id="CLU_074237_2_1_5"/>
<dbReference type="OrthoDB" id="9802408at2"/>
<dbReference type="Proteomes" id="UP000008809">
    <property type="component" value="Chromosome"/>
</dbReference>
<dbReference type="GO" id="GO:0022625">
    <property type="term" value="C:cytosolic large ribosomal subunit"/>
    <property type="evidence" value="ECO:0007669"/>
    <property type="project" value="TreeGrafter"/>
</dbReference>
<dbReference type="GO" id="GO:0070180">
    <property type="term" value="F:large ribosomal subunit rRNA binding"/>
    <property type="evidence" value="ECO:0007669"/>
    <property type="project" value="UniProtKB-UniRule"/>
</dbReference>
<dbReference type="GO" id="GO:0003735">
    <property type="term" value="F:structural constituent of ribosome"/>
    <property type="evidence" value="ECO:0007669"/>
    <property type="project" value="InterPro"/>
</dbReference>
<dbReference type="GO" id="GO:0006412">
    <property type="term" value="P:translation"/>
    <property type="evidence" value="ECO:0007669"/>
    <property type="project" value="UniProtKB-UniRule"/>
</dbReference>
<dbReference type="CDD" id="cd00349">
    <property type="entry name" value="Ribosomal_L11"/>
    <property type="match status" value="1"/>
</dbReference>
<dbReference type="FunFam" id="1.10.10.250:FF:000001">
    <property type="entry name" value="50S ribosomal protein L11"/>
    <property type="match status" value="1"/>
</dbReference>
<dbReference type="FunFam" id="3.30.1550.10:FF:000001">
    <property type="entry name" value="50S ribosomal protein L11"/>
    <property type="match status" value="1"/>
</dbReference>
<dbReference type="Gene3D" id="1.10.10.250">
    <property type="entry name" value="Ribosomal protein L11, C-terminal domain"/>
    <property type="match status" value="1"/>
</dbReference>
<dbReference type="Gene3D" id="3.30.1550.10">
    <property type="entry name" value="Ribosomal protein L11/L12, N-terminal domain"/>
    <property type="match status" value="1"/>
</dbReference>
<dbReference type="HAMAP" id="MF_00736">
    <property type="entry name" value="Ribosomal_uL11"/>
    <property type="match status" value="1"/>
</dbReference>
<dbReference type="InterPro" id="IPR000911">
    <property type="entry name" value="Ribosomal_uL11"/>
</dbReference>
<dbReference type="InterPro" id="IPR006519">
    <property type="entry name" value="Ribosomal_uL11_bac-typ"/>
</dbReference>
<dbReference type="InterPro" id="IPR020783">
    <property type="entry name" value="Ribosomal_uL11_C"/>
</dbReference>
<dbReference type="InterPro" id="IPR036769">
    <property type="entry name" value="Ribosomal_uL11_C_sf"/>
</dbReference>
<dbReference type="InterPro" id="IPR020785">
    <property type="entry name" value="Ribosomal_uL11_CS"/>
</dbReference>
<dbReference type="InterPro" id="IPR020784">
    <property type="entry name" value="Ribosomal_uL11_N"/>
</dbReference>
<dbReference type="InterPro" id="IPR036796">
    <property type="entry name" value="Ribosomal_uL11_N_sf"/>
</dbReference>
<dbReference type="NCBIfam" id="TIGR01632">
    <property type="entry name" value="L11_bact"/>
    <property type="match status" value="1"/>
</dbReference>
<dbReference type="PANTHER" id="PTHR11661">
    <property type="entry name" value="60S RIBOSOMAL PROTEIN L12"/>
    <property type="match status" value="1"/>
</dbReference>
<dbReference type="PANTHER" id="PTHR11661:SF1">
    <property type="entry name" value="LARGE RIBOSOMAL SUBUNIT PROTEIN UL11M"/>
    <property type="match status" value="1"/>
</dbReference>
<dbReference type="Pfam" id="PF00298">
    <property type="entry name" value="Ribosomal_L11"/>
    <property type="match status" value="1"/>
</dbReference>
<dbReference type="Pfam" id="PF03946">
    <property type="entry name" value="Ribosomal_L11_N"/>
    <property type="match status" value="1"/>
</dbReference>
<dbReference type="SMART" id="SM00649">
    <property type="entry name" value="RL11"/>
    <property type="match status" value="1"/>
</dbReference>
<dbReference type="SUPFAM" id="SSF54747">
    <property type="entry name" value="Ribosomal L11/L12e N-terminal domain"/>
    <property type="match status" value="1"/>
</dbReference>
<dbReference type="SUPFAM" id="SSF46906">
    <property type="entry name" value="Ribosomal protein L11, C-terminal domain"/>
    <property type="match status" value="1"/>
</dbReference>
<dbReference type="PROSITE" id="PS00359">
    <property type="entry name" value="RIBOSOMAL_L11"/>
    <property type="match status" value="1"/>
</dbReference>
<proteinExistence type="inferred from homology"/>
<evidence type="ECO:0000255" key="1">
    <source>
        <dbReference type="HAMAP-Rule" id="MF_00736"/>
    </source>
</evidence>
<evidence type="ECO:0000305" key="2"/>
<protein>
    <recommendedName>
        <fullName evidence="1">Large ribosomal subunit protein uL11</fullName>
    </recommendedName>
    <alternativeName>
        <fullName evidence="2">50S ribosomal protein L11</fullName>
    </alternativeName>
</protein>
<keyword id="KW-0488">Methylation</keyword>
<keyword id="KW-1185">Reference proteome</keyword>
<keyword id="KW-0687">Ribonucleoprotein</keyword>
<keyword id="KW-0689">Ribosomal protein</keyword>
<keyword id="KW-0694">RNA-binding</keyword>
<keyword id="KW-0699">rRNA-binding</keyword>
<reference key="1">
    <citation type="submission" date="2006-01" db="EMBL/GenBank/DDBJ databases">
        <title>Complete sequence of Rhodopseudomonas palustris HaA2.</title>
        <authorList>
            <consortium name="US DOE Joint Genome Institute"/>
            <person name="Copeland A."/>
            <person name="Lucas S."/>
            <person name="Lapidus A."/>
            <person name="Barry K."/>
            <person name="Detter J.C."/>
            <person name="Glavina T."/>
            <person name="Hammon N."/>
            <person name="Israni S."/>
            <person name="Pitluck S."/>
            <person name="Chain P."/>
            <person name="Malfatti S."/>
            <person name="Shin M."/>
            <person name="Vergez L."/>
            <person name="Schmutz J."/>
            <person name="Larimer F."/>
            <person name="Land M."/>
            <person name="Hauser L."/>
            <person name="Pelletier D.A."/>
            <person name="Kyrpides N."/>
            <person name="Anderson I."/>
            <person name="Oda Y."/>
            <person name="Harwood C.S."/>
            <person name="Richardson P."/>
        </authorList>
    </citation>
    <scope>NUCLEOTIDE SEQUENCE [LARGE SCALE GENOMIC DNA]</scope>
    <source>
        <strain>HaA2</strain>
    </source>
</reference>
<organism>
    <name type="scientific">Rhodopseudomonas palustris (strain HaA2)</name>
    <dbReference type="NCBI Taxonomy" id="316058"/>
    <lineage>
        <taxon>Bacteria</taxon>
        <taxon>Pseudomonadati</taxon>
        <taxon>Pseudomonadota</taxon>
        <taxon>Alphaproteobacteria</taxon>
        <taxon>Hyphomicrobiales</taxon>
        <taxon>Nitrobacteraceae</taxon>
        <taxon>Rhodopseudomonas</taxon>
    </lineage>
</organism>
<sequence>MAKKVTGYLKLQVPAGAANPSPPIGPALGQRGLNIMEFCKAFNAQTQKEEKNTPIPVVITIYADRSFTFEMKTPPMSFFLKQAAKIQSGSKLPGRDSAGKVTSAQVREIAEKKMKDLNCDSIESAMRMVEGSARSMGLQVEG</sequence>
<name>RL11_RHOP2</name>